<name>RS11_ROSCS</name>
<comment type="function">
    <text evidence="1">Located on the platform of the 30S subunit, it bridges several disparate RNA helices of the 16S rRNA. Forms part of the Shine-Dalgarno cleft in the 70S ribosome.</text>
</comment>
<comment type="subunit">
    <text evidence="1">Part of the 30S ribosomal subunit. Interacts with proteins S7 and S18. Binds to IF-3.</text>
</comment>
<comment type="similarity">
    <text evidence="1">Belongs to the universal ribosomal protein uS11 family.</text>
</comment>
<accession>A7NR38</accession>
<keyword id="KW-1185">Reference proteome</keyword>
<keyword id="KW-0687">Ribonucleoprotein</keyword>
<keyword id="KW-0689">Ribosomal protein</keyword>
<keyword id="KW-0694">RNA-binding</keyword>
<keyword id="KW-0699">rRNA-binding</keyword>
<evidence type="ECO:0000255" key="1">
    <source>
        <dbReference type="HAMAP-Rule" id="MF_01310"/>
    </source>
</evidence>
<evidence type="ECO:0000256" key="2">
    <source>
        <dbReference type="SAM" id="MobiDB-lite"/>
    </source>
</evidence>
<evidence type="ECO:0000305" key="3"/>
<reference key="1">
    <citation type="submission" date="2007-08" db="EMBL/GenBank/DDBJ databases">
        <title>Complete sequence of Roseiflexus castenholzii DSM 13941.</title>
        <authorList>
            <consortium name="US DOE Joint Genome Institute"/>
            <person name="Copeland A."/>
            <person name="Lucas S."/>
            <person name="Lapidus A."/>
            <person name="Barry K."/>
            <person name="Glavina del Rio T."/>
            <person name="Dalin E."/>
            <person name="Tice H."/>
            <person name="Pitluck S."/>
            <person name="Thompson L.S."/>
            <person name="Brettin T."/>
            <person name="Bruce D."/>
            <person name="Detter J.C."/>
            <person name="Han C."/>
            <person name="Tapia R."/>
            <person name="Schmutz J."/>
            <person name="Larimer F."/>
            <person name="Land M."/>
            <person name="Hauser L."/>
            <person name="Kyrpides N."/>
            <person name="Mikhailova N."/>
            <person name="Bryant D.A."/>
            <person name="Hanada S."/>
            <person name="Tsukatani Y."/>
            <person name="Richardson P."/>
        </authorList>
    </citation>
    <scope>NUCLEOTIDE SEQUENCE [LARGE SCALE GENOMIC DNA]</scope>
    <source>
        <strain>DSM 13941 / HLO8</strain>
    </source>
</reference>
<organism>
    <name type="scientific">Roseiflexus castenholzii (strain DSM 13941 / HLO8)</name>
    <dbReference type="NCBI Taxonomy" id="383372"/>
    <lineage>
        <taxon>Bacteria</taxon>
        <taxon>Bacillati</taxon>
        <taxon>Chloroflexota</taxon>
        <taxon>Chloroflexia</taxon>
        <taxon>Chloroflexales</taxon>
        <taxon>Roseiflexineae</taxon>
        <taxon>Roseiflexaceae</taxon>
        <taxon>Roseiflexus</taxon>
    </lineage>
</organism>
<sequence>MAKQSAKGSTTTKRQRGKRREKKNVPRGQAHIQSTFNNTIVTITDPNGNVVCWSSAGQNGFKGSRKSTPYAAQIAAENAARKAIENGMRQIEVFVKGPGAGREAAIRSLQAAGLQVTAITDVTPIPHNGCRPPKRRRV</sequence>
<proteinExistence type="inferred from homology"/>
<gene>
    <name evidence="1" type="primary">rpsK</name>
    <name type="ordered locus">Rcas_4001</name>
</gene>
<protein>
    <recommendedName>
        <fullName evidence="1">Small ribosomal subunit protein uS11</fullName>
    </recommendedName>
    <alternativeName>
        <fullName evidence="3">30S ribosomal protein S11</fullName>
    </alternativeName>
</protein>
<dbReference type="EMBL" id="CP000804">
    <property type="protein sequence ID" value="ABU60034.1"/>
    <property type="molecule type" value="Genomic_DNA"/>
</dbReference>
<dbReference type="RefSeq" id="WP_012122457.1">
    <property type="nucleotide sequence ID" value="NC_009767.1"/>
</dbReference>
<dbReference type="SMR" id="A7NR38"/>
<dbReference type="STRING" id="383372.Rcas_4001"/>
<dbReference type="KEGG" id="rca:Rcas_4001"/>
<dbReference type="eggNOG" id="COG0100">
    <property type="taxonomic scope" value="Bacteria"/>
</dbReference>
<dbReference type="HOGENOM" id="CLU_072439_5_0_0"/>
<dbReference type="OrthoDB" id="9806415at2"/>
<dbReference type="Proteomes" id="UP000000263">
    <property type="component" value="Chromosome"/>
</dbReference>
<dbReference type="GO" id="GO:1990904">
    <property type="term" value="C:ribonucleoprotein complex"/>
    <property type="evidence" value="ECO:0007669"/>
    <property type="project" value="UniProtKB-KW"/>
</dbReference>
<dbReference type="GO" id="GO:0005840">
    <property type="term" value="C:ribosome"/>
    <property type="evidence" value="ECO:0007669"/>
    <property type="project" value="UniProtKB-KW"/>
</dbReference>
<dbReference type="GO" id="GO:0019843">
    <property type="term" value="F:rRNA binding"/>
    <property type="evidence" value="ECO:0007669"/>
    <property type="project" value="UniProtKB-UniRule"/>
</dbReference>
<dbReference type="GO" id="GO:0003735">
    <property type="term" value="F:structural constituent of ribosome"/>
    <property type="evidence" value="ECO:0007669"/>
    <property type="project" value="InterPro"/>
</dbReference>
<dbReference type="GO" id="GO:0006412">
    <property type="term" value="P:translation"/>
    <property type="evidence" value="ECO:0007669"/>
    <property type="project" value="UniProtKB-UniRule"/>
</dbReference>
<dbReference type="FunFam" id="3.30.420.80:FF:000001">
    <property type="entry name" value="30S ribosomal protein S11"/>
    <property type="match status" value="1"/>
</dbReference>
<dbReference type="Gene3D" id="3.30.420.80">
    <property type="entry name" value="Ribosomal protein S11"/>
    <property type="match status" value="1"/>
</dbReference>
<dbReference type="HAMAP" id="MF_01310">
    <property type="entry name" value="Ribosomal_uS11"/>
    <property type="match status" value="1"/>
</dbReference>
<dbReference type="InterPro" id="IPR001971">
    <property type="entry name" value="Ribosomal_uS11"/>
</dbReference>
<dbReference type="InterPro" id="IPR019981">
    <property type="entry name" value="Ribosomal_uS11_bac-type"/>
</dbReference>
<dbReference type="InterPro" id="IPR018102">
    <property type="entry name" value="Ribosomal_uS11_CS"/>
</dbReference>
<dbReference type="InterPro" id="IPR036967">
    <property type="entry name" value="Ribosomal_uS11_sf"/>
</dbReference>
<dbReference type="NCBIfam" id="NF003698">
    <property type="entry name" value="PRK05309.1"/>
    <property type="match status" value="1"/>
</dbReference>
<dbReference type="NCBIfam" id="TIGR03632">
    <property type="entry name" value="uS11_bact"/>
    <property type="match status" value="1"/>
</dbReference>
<dbReference type="PANTHER" id="PTHR11759">
    <property type="entry name" value="40S RIBOSOMAL PROTEIN S14/30S RIBOSOMAL PROTEIN S11"/>
    <property type="match status" value="1"/>
</dbReference>
<dbReference type="Pfam" id="PF00411">
    <property type="entry name" value="Ribosomal_S11"/>
    <property type="match status" value="1"/>
</dbReference>
<dbReference type="PIRSF" id="PIRSF002131">
    <property type="entry name" value="Ribosomal_S11"/>
    <property type="match status" value="1"/>
</dbReference>
<dbReference type="SUPFAM" id="SSF53137">
    <property type="entry name" value="Translational machinery components"/>
    <property type="match status" value="1"/>
</dbReference>
<dbReference type="PROSITE" id="PS00054">
    <property type="entry name" value="RIBOSOMAL_S11"/>
    <property type="match status" value="1"/>
</dbReference>
<feature type="chain" id="PRO_1000086205" description="Small ribosomal subunit protein uS11">
    <location>
        <begin position="1"/>
        <end position="138"/>
    </location>
</feature>
<feature type="region of interest" description="Disordered" evidence="2">
    <location>
        <begin position="1"/>
        <end position="37"/>
    </location>
</feature>
<feature type="compositionally biased region" description="Polar residues" evidence="2">
    <location>
        <begin position="1"/>
        <end position="12"/>
    </location>
</feature>
<feature type="compositionally biased region" description="Basic residues" evidence="2">
    <location>
        <begin position="13"/>
        <end position="22"/>
    </location>
</feature>